<keyword id="KW-0687">Ribonucleoprotein</keyword>
<keyword id="KW-0689">Ribosomal protein</keyword>
<keyword id="KW-0694">RNA-binding</keyword>
<keyword id="KW-0699">rRNA-binding</keyword>
<evidence type="ECO:0000255" key="1">
    <source>
        <dbReference type="HAMAP-Rule" id="MF_00531"/>
    </source>
</evidence>
<evidence type="ECO:0000305" key="2"/>
<comment type="function">
    <text evidence="1">Protein S19 forms a complex with S13 that binds strongly to the 16S ribosomal RNA.</text>
</comment>
<comment type="similarity">
    <text evidence="1">Belongs to the universal ribosomal protein uS19 family.</text>
</comment>
<gene>
    <name evidence="1" type="primary">rps19</name>
    <name type="ordered locus">Tneu_0724</name>
</gene>
<sequence length="158" mass="18052">MSSKEQEAQKGKQGWITPAVIPPEEWGTFRYRGKTLEELLNLPMDEFIKLLPARQRRSLKRGLKPEHRKLLEKIRKAKRLAAQGKKVTIKTHSRDMIILPEMVGLTIHVYNGITYIPVFISPWHIGHYLGEFALTTKVVQHGEPGLKATRSSLHIAAK</sequence>
<organism>
    <name type="scientific">Pyrobaculum neutrophilum (strain DSM 2338 / JCM 9278 / NBRC 100436 / V24Sta)</name>
    <name type="common">Thermoproteus neutrophilus</name>
    <dbReference type="NCBI Taxonomy" id="444157"/>
    <lineage>
        <taxon>Archaea</taxon>
        <taxon>Thermoproteota</taxon>
        <taxon>Thermoprotei</taxon>
        <taxon>Thermoproteales</taxon>
        <taxon>Thermoproteaceae</taxon>
        <taxon>Pyrobaculum</taxon>
    </lineage>
</organism>
<feature type="chain" id="PRO_0000354327" description="Small ribosomal subunit protein uS19">
    <location>
        <begin position="1"/>
        <end position="158"/>
    </location>
</feature>
<name>RS19_PYRNV</name>
<reference key="1">
    <citation type="submission" date="2008-03" db="EMBL/GenBank/DDBJ databases">
        <title>Complete sequence of Thermoproteus neutrophilus V24Sta.</title>
        <authorList>
            <consortium name="US DOE Joint Genome Institute"/>
            <person name="Copeland A."/>
            <person name="Lucas S."/>
            <person name="Lapidus A."/>
            <person name="Glavina del Rio T."/>
            <person name="Dalin E."/>
            <person name="Tice H."/>
            <person name="Bruce D."/>
            <person name="Goodwin L."/>
            <person name="Pitluck S."/>
            <person name="Sims D."/>
            <person name="Brettin T."/>
            <person name="Detter J.C."/>
            <person name="Han C."/>
            <person name="Kuske C.R."/>
            <person name="Schmutz J."/>
            <person name="Larimer F."/>
            <person name="Land M."/>
            <person name="Hauser L."/>
            <person name="Kyrpides N."/>
            <person name="Mikhailova N."/>
            <person name="Biddle J.F."/>
            <person name="Zhang Z."/>
            <person name="Fitz-Gibbon S.T."/>
            <person name="Lowe T.M."/>
            <person name="Saltikov C."/>
            <person name="House C.H."/>
            <person name="Richardson P."/>
        </authorList>
    </citation>
    <scope>NUCLEOTIDE SEQUENCE [LARGE SCALE GENOMIC DNA]</scope>
    <source>
        <strain>DSM 2338 / JCM 9278 / NBRC 100436 / V24Sta</strain>
    </source>
</reference>
<accession>B1YD00</accession>
<dbReference type="EMBL" id="CP001014">
    <property type="protein sequence ID" value="ACB39663.1"/>
    <property type="molecule type" value="Genomic_DNA"/>
</dbReference>
<dbReference type="RefSeq" id="WP_012350083.1">
    <property type="nucleotide sequence ID" value="NC_010525.1"/>
</dbReference>
<dbReference type="SMR" id="B1YD00"/>
<dbReference type="STRING" id="444157.Tneu_0724"/>
<dbReference type="GeneID" id="6165592"/>
<dbReference type="KEGG" id="tne:Tneu_0724"/>
<dbReference type="eggNOG" id="arCOG04099">
    <property type="taxonomic scope" value="Archaea"/>
</dbReference>
<dbReference type="HOGENOM" id="CLU_097347_1_1_2"/>
<dbReference type="OrthoDB" id="30559at2157"/>
<dbReference type="Proteomes" id="UP000001694">
    <property type="component" value="Chromosome"/>
</dbReference>
<dbReference type="GO" id="GO:0022627">
    <property type="term" value="C:cytosolic small ribosomal subunit"/>
    <property type="evidence" value="ECO:0007669"/>
    <property type="project" value="TreeGrafter"/>
</dbReference>
<dbReference type="GO" id="GO:0019843">
    <property type="term" value="F:rRNA binding"/>
    <property type="evidence" value="ECO:0007669"/>
    <property type="project" value="UniProtKB-UniRule"/>
</dbReference>
<dbReference type="GO" id="GO:0003735">
    <property type="term" value="F:structural constituent of ribosome"/>
    <property type="evidence" value="ECO:0007669"/>
    <property type="project" value="InterPro"/>
</dbReference>
<dbReference type="GO" id="GO:0000028">
    <property type="term" value="P:ribosomal small subunit assembly"/>
    <property type="evidence" value="ECO:0007669"/>
    <property type="project" value="TreeGrafter"/>
</dbReference>
<dbReference type="GO" id="GO:0006412">
    <property type="term" value="P:translation"/>
    <property type="evidence" value="ECO:0007669"/>
    <property type="project" value="UniProtKB-UniRule"/>
</dbReference>
<dbReference type="FunFam" id="3.30.860.10:FF:000002">
    <property type="entry name" value="40S ribosomal protein S15"/>
    <property type="match status" value="1"/>
</dbReference>
<dbReference type="Gene3D" id="3.30.860.10">
    <property type="entry name" value="30s Ribosomal Protein S19, Chain A"/>
    <property type="match status" value="1"/>
</dbReference>
<dbReference type="HAMAP" id="MF_00531">
    <property type="entry name" value="Ribosomal_uS19"/>
    <property type="match status" value="1"/>
</dbReference>
<dbReference type="InterPro" id="IPR002222">
    <property type="entry name" value="Ribosomal_uS19"/>
</dbReference>
<dbReference type="InterPro" id="IPR020934">
    <property type="entry name" value="Ribosomal_uS19_CS"/>
</dbReference>
<dbReference type="InterPro" id="IPR005713">
    <property type="entry name" value="Ribosomal_uS19_euk/arc"/>
</dbReference>
<dbReference type="InterPro" id="IPR023575">
    <property type="entry name" value="Ribosomal_uS19_SF"/>
</dbReference>
<dbReference type="NCBIfam" id="NF003121">
    <property type="entry name" value="PRK04038.1"/>
    <property type="match status" value="1"/>
</dbReference>
<dbReference type="NCBIfam" id="TIGR01025">
    <property type="entry name" value="uS19_arch"/>
    <property type="match status" value="1"/>
</dbReference>
<dbReference type="PANTHER" id="PTHR11880">
    <property type="entry name" value="RIBOSOMAL PROTEIN S19P FAMILY MEMBER"/>
    <property type="match status" value="1"/>
</dbReference>
<dbReference type="PANTHER" id="PTHR11880:SF2">
    <property type="entry name" value="SMALL RIBOSOMAL SUBUNIT PROTEIN US19"/>
    <property type="match status" value="1"/>
</dbReference>
<dbReference type="Pfam" id="PF00203">
    <property type="entry name" value="Ribosomal_S19"/>
    <property type="match status" value="1"/>
</dbReference>
<dbReference type="PIRSF" id="PIRSF002144">
    <property type="entry name" value="Ribosomal_S19"/>
    <property type="match status" value="1"/>
</dbReference>
<dbReference type="PRINTS" id="PR00975">
    <property type="entry name" value="RIBOSOMALS19"/>
</dbReference>
<dbReference type="SUPFAM" id="SSF54570">
    <property type="entry name" value="Ribosomal protein S19"/>
    <property type="match status" value="1"/>
</dbReference>
<dbReference type="PROSITE" id="PS00323">
    <property type="entry name" value="RIBOSOMAL_S19"/>
    <property type="match status" value="1"/>
</dbReference>
<protein>
    <recommendedName>
        <fullName evidence="1">Small ribosomal subunit protein uS19</fullName>
    </recommendedName>
    <alternativeName>
        <fullName evidence="2">30S ribosomal protein S19</fullName>
    </alternativeName>
</protein>
<proteinExistence type="inferred from homology"/>